<accession>C4R2P5</accession>
<evidence type="ECO:0000250" key="1"/>
<evidence type="ECO:0000255" key="2"/>
<evidence type="ECO:0000305" key="3"/>
<reference key="1">
    <citation type="journal article" date="2009" name="Nat. Biotechnol.">
        <title>Genome sequence of the recombinant protein production host Pichia pastoris.</title>
        <authorList>
            <person name="De Schutter K."/>
            <person name="Lin Y.-C."/>
            <person name="Tiels P."/>
            <person name="Van Hecke A."/>
            <person name="Glinka S."/>
            <person name="Weber-Lehmann J."/>
            <person name="Rouze P."/>
            <person name="Van de Peer Y."/>
            <person name="Callewaert N."/>
        </authorList>
    </citation>
    <scope>NUCLEOTIDE SEQUENCE [LARGE SCALE GENOMIC DNA]</scope>
    <source>
        <strain>GS115 / ATCC 20864</strain>
    </source>
</reference>
<feature type="signal peptide" evidence="2">
    <location>
        <begin position="1"/>
        <end position="19"/>
    </location>
</feature>
<feature type="chain" id="PRO_0000408622" description="Long chronological lifespan protein 2">
    <location>
        <begin position="20"/>
        <end position="120"/>
    </location>
</feature>
<dbReference type="EMBL" id="FN392320">
    <property type="protein sequence ID" value="CAY69769.1"/>
    <property type="molecule type" value="Genomic_DNA"/>
</dbReference>
<dbReference type="RefSeq" id="XP_002492049.1">
    <property type="nucleotide sequence ID" value="XM_002492004.1"/>
</dbReference>
<dbReference type="FunCoup" id="C4R2P5">
    <property type="interactions" value="17"/>
</dbReference>
<dbReference type="STRING" id="644223.C4R2P5"/>
<dbReference type="EnsemblFungi" id="CAY69769">
    <property type="protein sequence ID" value="CAY69769"/>
    <property type="gene ID" value="PAS_chr2-2_0158"/>
</dbReference>
<dbReference type="GeneID" id="8198268"/>
<dbReference type="KEGG" id="ppa:PAS_chr2-2_0158"/>
<dbReference type="eggNOG" id="ENOG502S416">
    <property type="taxonomic scope" value="Eukaryota"/>
</dbReference>
<dbReference type="HOGENOM" id="CLU_142363_1_0_1"/>
<dbReference type="InParanoid" id="C4R2P5"/>
<dbReference type="OMA" id="DNYLCPD"/>
<dbReference type="OrthoDB" id="2234316at2759"/>
<dbReference type="Proteomes" id="UP000000314">
    <property type="component" value="Chromosome 2"/>
</dbReference>
<dbReference type="GO" id="GO:0036503">
    <property type="term" value="P:ERAD pathway"/>
    <property type="evidence" value="ECO:0007669"/>
    <property type="project" value="TreeGrafter"/>
</dbReference>
<dbReference type="CDD" id="cd23996">
    <property type="entry name" value="LCL2-like"/>
    <property type="match status" value="1"/>
</dbReference>
<dbReference type="InterPro" id="IPR034543">
    <property type="entry name" value="LCL2"/>
</dbReference>
<dbReference type="PANTHER" id="PTHR38425">
    <property type="entry name" value="LONG CHRONOLOGICAL LIFESPAN PROTEIN 2"/>
    <property type="match status" value="1"/>
</dbReference>
<dbReference type="PANTHER" id="PTHR38425:SF1">
    <property type="entry name" value="LONG CHRONOLOGICAL LIFESPAN PROTEIN 2"/>
    <property type="match status" value="1"/>
</dbReference>
<keyword id="KW-1185">Reference proteome</keyword>
<keyword id="KW-0732">Signal</keyword>
<sequence length="120" mass="13599">MRGFVVATIIVGAANCVMAFDFEQFFGGQNRQQQRTQQNNQPQDYEQQQLNSDCQKYLCPETFACVAKPVDCPCPFPQSQIKCVFPDKQNFVCISSPVDNVNGVPVRDCKWVEKAWKGLL</sequence>
<name>LCL2_KOMPG</name>
<gene>
    <name type="primary">LCL2</name>
    <name type="ordered locus">PAS_chr2-2_0158</name>
</gene>
<comment type="function">
    <text evidence="1">Probable component of the endoplasmic reticulum-associated degradation (ERAD) pathway.</text>
</comment>
<comment type="similarity">
    <text evidence="3">Belongs to the LCL2 family.</text>
</comment>
<protein>
    <recommendedName>
        <fullName>Long chronological lifespan protein 2</fullName>
    </recommendedName>
</protein>
<organism>
    <name type="scientific">Komagataella phaffii (strain GS115 / ATCC 20864)</name>
    <name type="common">Yeast</name>
    <name type="synonym">Pichia pastoris</name>
    <dbReference type="NCBI Taxonomy" id="644223"/>
    <lineage>
        <taxon>Eukaryota</taxon>
        <taxon>Fungi</taxon>
        <taxon>Dikarya</taxon>
        <taxon>Ascomycota</taxon>
        <taxon>Saccharomycotina</taxon>
        <taxon>Pichiomycetes</taxon>
        <taxon>Pichiales</taxon>
        <taxon>Pichiaceae</taxon>
        <taxon>Komagataella</taxon>
    </lineage>
</organism>
<proteinExistence type="inferred from homology"/>